<accession>Q29CW2</accession>
<gene>
    <name evidence="1" type="primary">dan</name>
    <name type="ORF">GA11234</name>
</gene>
<keyword id="KW-0217">Developmental protein</keyword>
<keyword id="KW-0238">DNA-binding</keyword>
<keyword id="KW-0539">Nucleus</keyword>
<keyword id="KW-0597">Phosphoprotein</keyword>
<keyword id="KW-1185">Reference proteome</keyword>
<keyword id="KW-0804">Transcription</keyword>
<keyword id="KW-0805">Transcription regulation</keyword>
<feature type="chain" id="PRO_0000351201" description="Protein distal antenna">
    <location>
        <begin position="1"/>
        <end position="683"/>
    </location>
</feature>
<feature type="domain" description="HTH psq-type" evidence="2">
    <location>
        <begin position="7"/>
        <end position="58"/>
    </location>
</feature>
<feature type="DNA-binding region" description="H-T-H motif" evidence="2">
    <location>
        <begin position="34"/>
        <end position="54"/>
    </location>
</feature>
<feature type="region of interest" description="Disordered" evidence="3">
    <location>
        <begin position="220"/>
        <end position="255"/>
    </location>
</feature>
<feature type="region of interest" description="Disordered" evidence="3">
    <location>
        <begin position="336"/>
        <end position="369"/>
    </location>
</feature>
<feature type="region of interest" description="Disordered" evidence="3">
    <location>
        <begin position="443"/>
        <end position="525"/>
    </location>
</feature>
<feature type="region of interest" description="Disordered" evidence="3">
    <location>
        <begin position="572"/>
        <end position="597"/>
    </location>
</feature>
<feature type="region of interest" description="Disordered" evidence="3">
    <location>
        <begin position="652"/>
        <end position="683"/>
    </location>
</feature>
<feature type="compositionally biased region" description="Low complexity" evidence="3">
    <location>
        <begin position="227"/>
        <end position="242"/>
    </location>
</feature>
<feature type="compositionally biased region" description="Polar residues" evidence="3">
    <location>
        <begin position="338"/>
        <end position="352"/>
    </location>
</feature>
<feature type="compositionally biased region" description="Polar residues" evidence="3">
    <location>
        <begin position="445"/>
        <end position="460"/>
    </location>
</feature>
<feature type="compositionally biased region" description="Acidic residues" evidence="3">
    <location>
        <begin position="462"/>
        <end position="478"/>
    </location>
</feature>
<feature type="compositionally biased region" description="Low complexity" evidence="3">
    <location>
        <begin position="575"/>
        <end position="591"/>
    </location>
</feature>
<protein>
    <recommendedName>
        <fullName evidence="1">Protein distal antenna</fullName>
    </recommendedName>
</protein>
<comment type="function">
    <text evidence="1">Probable transcription factor with a role in the retinal determination (RD) network. Regulates ato expression and is required for normal R8 induction and differentiation. Danr appears to repress Dan expression, but Dan is required for Danr expression anterior to the morphogenetic furrow (MF). Dan and Danr lie downstream of so and require dac function for highest levels of expression. Contributes to differentiation of antenna-specific characteristics; effector gene that acts downstream of homothorax (hth), Distal-less (Dll), cut (ct) and spineless (ss) genes to control differentiation of distal antennal structures (By similarity).</text>
</comment>
<comment type="subunit">
    <text evidence="1">Homomers. Interacts with itself, danr, ey and dac to form a complex (or complexes) containing the RD factors (By similarity).</text>
</comment>
<comment type="subcellular location">
    <subcellularLocation>
        <location evidence="1 2">Nucleus</location>
    </subcellularLocation>
</comment>
<organism>
    <name type="scientific">Drosophila pseudoobscura pseudoobscura</name>
    <name type="common">Fruit fly</name>
    <dbReference type="NCBI Taxonomy" id="46245"/>
    <lineage>
        <taxon>Eukaryota</taxon>
        <taxon>Metazoa</taxon>
        <taxon>Ecdysozoa</taxon>
        <taxon>Arthropoda</taxon>
        <taxon>Hexapoda</taxon>
        <taxon>Insecta</taxon>
        <taxon>Pterygota</taxon>
        <taxon>Neoptera</taxon>
        <taxon>Endopterygota</taxon>
        <taxon>Diptera</taxon>
        <taxon>Brachycera</taxon>
        <taxon>Muscomorpha</taxon>
        <taxon>Ephydroidea</taxon>
        <taxon>Drosophilidae</taxon>
        <taxon>Drosophila</taxon>
        <taxon>Sophophora</taxon>
    </lineage>
</organism>
<name>DAN_DROPS</name>
<sequence length="683" mass="74283">MNIRMGTKGKRPLRSLTPRDKIHAIQRIHDGESKASVARDIGVPESTLRGWCKNEDKLRFMSRQSTTDKMCADALADKLDVSTGLLGPPEKRQRIDPSLPLNFSNKMKFDELGFKRAPLNGLDYSTNKNISELNYNGLAVDYVGFNGQHKVFSGDINRPANPSPNAISPLSSLTHLSGLTGLSQSPLAISFNELTTNLNLLAQLNPSLAAMSGLNSFPTTANNLRNSKPSVQPPLQVQSPRSDSGDRTPGLSVKNWAKQKPLSAVSSDVSCSINLTIKNEAKGGDIKSPSPSIAPSHVGSIISLSNLAEDPLLYWLKSQQTMLGLNSLYPPMGMTSPPIRSSTPQHIIQHAQTPPLPSAPLTPSSTPSGSLDEKNVAWYNWCKVFGASLNTLNPNSATLAALQANSLQHQHQPISAVSDGTDIADTSKGPFDNILYSHLTKESETPSVRSLSSNEHNQLDQIEGDEVTDPDLDAEIEGDVPGKPEDLSASAKRITPSQSPIASLVPESHTTEPCAKTSTTPSDCISRPGSVGGDCKKILDNMLYKIGGIKSHMPTIVDTACESEASFINEHNQHSNNNDISASNNNNNNSNKTDEEEKAKYLDLTGDNEDVKAIRHGEKFLQWLENCSNPRVTAVQLMQLRFLIAAIKSSNEPQVTEKPNKDLLENEENTEEDSCRNKIRRRK</sequence>
<dbReference type="EMBL" id="CH475399">
    <property type="protein sequence ID" value="EAL29347.2"/>
    <property type="molecule type" value="Genomic_DNA"/>
</dbReference>
<dbReference type="SMR" id="Q29CW2"/>
<dbReference type="FunCoup" id="Q29CW2">
    <property type="interactions" value="167"/>
</dbReference>
<dbReference type="eggNOG" id="ENOG502S5K1">
    <property type="taxonomic scope" value="Eukaryota"/>
</dbReference>
<dbReference type="HOGENOM" id="CLU_405596_0_0_1"/>
<dbReference type="InParanoid" id="Q29CW2"/>
<dbReference type="OMA" id="HMNIRMG"/>
<dbReference type="Proteomes" id="UP000001819">
    <property type="component" value="Unplaced"/>
</dbReference>
<dbReference type="GO" id="GO:0005634">
    <property type="term" value="C:nucleus"/>
    <property type="evidence" value="ECO:0000250"/>
    <property type="project" value="UniProtKB"/>
</dbReference>
<dbReference type="GO" id="GO:0003677">
    <property type="term" value="F:DNA binding"/>
    <property type="evidence" value="ECO:0007669"/>
    <property type="project" value="UniProtKB-KW"/>
</dbReference>
<dbReference type="GO" id="GO:0003700">
    <property type="term" value="F:DNA-binding transcription factor activity"/>
    <property type="evidence" value="ECO:0000250"/>
    <property type="project" value="UniProtKB"/>
</dbReference>
<dbReference type="GO" id="GO:0007469">
    <property type="term" value="P:antennal development"/>
    <property type="evidence" value="ECO:0000250"/>
    <property type="project" value="UniProtKB"/>
</dbReference>
<dbReference type="GO" id="GO:0048749">
    <property type="term" value="P:compound eye development"/>
    <property type="evidence" value="ECO:0000250"/>
    <property type="project" value="UniProtKB"/>
</dbReference>
<dbReference type="GO" id="GO:0006355">
    <property type="term" value="P:regulation of DNA-templated transcription"/>
    <property type="evidence" value="ECO:0000250"/>
    <property type="project" value="UniProtKB"/>
</dbReference>
<dbReference type="GO" id="GO:0007379">
    <property type="term" value="P:segment specification"/>
    <property type="evidence" value="ECO:0000250"/>
    <property type="project" value="UniProtKB"/>
</dbReference>
<dbReference type="FunFam" id="1.10.10.10:FF:000293">
    <property type="entry name" value="Tigger transposable element-derived protein 5"/>
    <property type="match status" value="1"/>
</dbReference>
<dbReference type="Gene3D" id="1.10.10.10">
    <property type="entry name" value="Winged helix-like DNA-binding domain superfamily/Winged helix DNA-binding domain"/>
    <property type="match status" value="1"/>
</dbReference>
<dbReference type="InterPro" id="IPR009057">
    <property type="entry name" value="Homeodomain-like_sf"/>
</dbReference>
<dbReference type="InterPro" id="IPR007889">
    <property type="entry name" value="HTH_Psq"/>
</dbReference>
<dbReference type="InterPro" id="IPR051839">
    <property type="entry name" value="RD_transcriptional_regulator"/>
</dbReference>
<dbReference type="InterPro" id="IPR036388">
    <property type="entry name" value="WH-like_DNA-bd_sf"/>
</dbReference>
<dbReference type="PANTHER" id="PTHR33215">
    <property type="entry name" value="PROTEIN DISTAL ANTENNA"/>
    <property type="match status" value="1"/>
</dbReference>
<dbReference type="PANTHER" id="PTHR33215:SF13">
    <property type="entry name" value="PROTEIN DISTAL ANTENNA"/>
    <property type="match status" value="1"/>
</dbReference>
<dbReference type="Pfam" id="PF04218">
    <property type="entry name" value="CENP-B_N"/>
    <property type="match status" value="1"/>
</dbReference>
<dbReference type="SUPFAM" id="SSF46689">
    <property type="entry name" value="Homeodomain-like"/>
    <property type="match status" value="1"/>
</dbReference>
<dbReference type="PROSITE" id="PS50960">
    <property type="entry name" value="HTH_PSQ"/>
    <property type="match status" value="1"/>
</dbReference>
<evidence type="ECO:0000250" key="1">
    <source>
        <dbReference type="UniProtKB" id="Q9VBW6"/>
    </source>
</evidence>
<evidence type="ECO:0000255" key="2">
    <source>
        <dbReference type="PROSITE-ProRule" id="PRU00320"/>
    </source>
</evidence>
<evidence type="ECO:0000256" key="3">
    <source>
        <dbReference type="SAM" id="MobiDB-lite"/>
    </source>
</evidence>
<reference key="1">
    <citation type="journal article" date="2005" name="Genome Res.">
        <title>Comparative genome sequencing of Drosophila pseudoobscura: chromosomal, gene, and cis-element evolution.</title>
        <authorList>
            <person name="Richards S."/>
            <person name="Liu Y."/>
            <person name="Bettencourt B.R."/>
            <person name="Hradecky P."/>
            <person name="Letovsky S."/>
            <person name="Nielsen R."/>
            <person name="Thornton K."/>
            <person name="Hubisz M.J."/>
            <person name="Chen R."/>
            <person name="Meisel R.P."/>
            <person name="Couronne O."/>
            <person name="Hua S."/>
            <person name="Smith M.A."/>
            <person name="Zhang P."/>
            <person name="Liu J."/>
            <person name="Bussemaker H.J."/>
            <person name="van Batenburg M.F."/>
            <person name="Howells S.L."/>
            <person name="Scherer S.E."/>
            <person name="Sodergren E."/>
            <person name="Matthews B.B."/>
            <person name="Crosby M.A."/>
            <person name="Schroeder A.J."/>
            <person name="Ortiz-Barrientos D."/>
            <person name="Rives C.M."/>
            <person name="Metzker M.L."/>
            <person name="Muzny D.M."/>
            <person name="Scott G."/>
            <person name="Steffen D."/>
            <person name="Wheeler D.A."/>
            <person name="Worley K.C."/>
            <person name="Havlak P."/>
            <person name="Durbin K.J."/>
            <person name="Egan A."/>
            <person name="Gill R."/>
            <person name="Hume J."/>
            <person name="Morgan M.B."/>
            <person name="Miner G."/>
            <person name="Hamilton C."/>
            <person name="Huang Y."/>
            <person name="Waldron L."/>
            <person name="Verduzco D."/>
            <person name="Clerc-Blankenburg K.P."/>
            <person name="Dubchak I."/>
            <person name="Noor M.A.F."/>
            <person name="Anderson W."/>
            <person name="White K.P."/>
            <person name="Clark A.G."/>
            <person name="Schaeffer S.W."/>
            <person name="Gelbart W.M."/>
            <person name="Weinstock G.M."/>
            <person name="Gibbs R.A."/>
        </authorList>
    </citation>
    <scope>NUCLEOTIDE SEQUENCE [LARGE SCALE GENOMIC DNA]</scope>
    <source>
        <strain>MV2-25 / Tucson 14011-0121.94</strain>
    </source>
</reference>
<proteinExistence type="inferred from homology"/>